<comment type="tissue specificity">
    <text evidence="3">Expressed at low levels during seed development.</text>
</comment>
<comment type="similarity">
    <text evidence="4">Belongs to the Frigida family.</text>
</comment>
<comment type="sequence caution" evidence="4">
    <conflict type="erroneous gene model prediction">
        <sequence resource="EMBL-CDS" id="AAB61078"/>
    </conflict>
</comment>
<gene>
    <name type="primary">FRL5</name>
    <name type="ordered locus">At5g27230</name>
    <name type="ORF">A_TM021B04.8</name>
</gene>
<protein>
    <recommendedName>
        <fullName>FRIGIDA-like protein 5</fullName>
    </recommendedName>
</protein>
<keyword id="KW-0175">Coiled coil</keyword>
<keyword id="KW-0217">Developmental protein</keyword>
<keyword id="KW-0221">Differentiation</keyword>
<keyword id="KW-0287">Flowering</keyword>
<keyword id="KW-1185">Reference proteome</keyword>
<accession>Q5XV31</accession>
<accession>O04649</accession>
<name>FRL5_ARATH</name>
<organism>
    <name type="scientific">Arabidopsis thaliana</name>
    <name type="common">Mouse-ear cress</name>
    <dbReference type="NCBI Taxonomy" id="3702"/>
    <lineage>
        <taxon>Eukaryota</taxon>
        <taxon>Viridiplantae</taxon>
        <taxon>Streptophyta</taxon>
        <taxon>Embryophyta</taxon>
        <taxon>Tracheophyta</taxon>
        <taxon>Spermatophyta</taxon>
        <taxon>Magnoliopsida</taxon>
        <taxon>eudicotyledons</taxon>
        <taxon>Gunneridae</taxon>
        <taxon>Pentapetalae</taxon>
        <taxon>rosids</taxon>
        <taxon>malvids</taxon>
        <taxon>Brassicales</taxon>
        <taxon>Brassicaceae</taxon>
        <taxon>Camelineae</taxon>
        <taxon>Arabidopsis</taxon>
    </lineage>
</organism>
<dbReference type="EMBL" id="AF007271">
    <property type="protein sequence ID" value="AAB61078.1"/>
    <property type="status" value="ALT_SEQ"/>
    <property type="molecule type" value="Genomic_DNA"/>
</dbReference>
<dbReference type="EMBL" id="CP002688">
    <property type="protein sequence ID" value="AED93660.1"/>
    <property type="molecule type" value="Genomic_DNA"/>
</dbReference>
<dbReference type="EMBL" id="AY735691">
    <property type="protein sequence ID" value="AAU44561.1"/>
    <property type="molecule type" value="mRNA"/>
</dbReference>
<dbReference type="PIR" id="T01798">
    <property type="entry name" value="T01798"/>
</dbReference>
<dbReference type="RefSeq" id="NP_198075.1">
    <property type="nucleotide sequence ID" value="NM_122605.2"/>
</dbReference>
<dbReference type="SMR" id="Q5XV31"/>
<dbReference type="FunCoup" id="Q5XV31">
    <property type="interactions" value="10"/>
</dbReference>
<dbReference type="STRING" id="3702.Q5XV31"/>
<dbReference type="iPTMnet" id="Q5XV31"/>
<dbReference type="PaxDb" id="3702-AT5G27230.1"/>
<dbReference type="ProteomicsDB" id="228951"/>
<dbReference type="EnsemblPlants" id="AT5G27230.1">
    <property type="protein sequence ID" value="AT5G27230.1"/>
    <property type="gene ID" value="AT5G27230"/>
</dbReference>
<dbReference type="GeneID" id="832781"/>
<dbReference type="Gramene" id="AT5G27230.1">
    <property type="protein sequence ID" value="AT5G27230.1"/>
    <property type="gene ID" value="AT5G27230"/>
</dbReference>
<dbReference type="KEGG" id="ath:AT5G27230"/>
<dbReference type="Araport" id="AT5G27230"/>
<dbReference type="TAIR" id="AT5G27230"/>
<dbReference type="eggNOG" id="ENOG502SIE9">
    <property type="taxonomic scope" value="Eukaryota"/>
</dbReference>
<dbReference type="HOGENOM" id="CLU_316033_0_0_1"/>
<dbReference type="InParanoid" id="Q5XV31"/>
<dbReference type="OMA" id="DNSYWQT"/>
<dbReference type="PhylomeDB" id="Q5XV31"/>
<dbReference type="PRO" id="PR:Q5XV31"/>
<dbReference type="Proteomes" id="UP000006548">
    <property type="component" value="Chromosome 5"/>
</dbReference>
<dbReference type="ExpressionAtlas" id="Q5XV31">
    <property type="expression patterns" value="baseline and differential"/>
</dbReference>
<dbReference type="GO" id="GO:0030154">
    <property type="term" value="P:cell differentiation"/>
    <property type="evidence" value="ECO:0007669"/>
    <property type="project" value="UniProtKB-KW"/>
</dbReference>
<dbReference type="GO" id="GO:0009908">
    <property type="term" value="P:flower development"/>
    <property type="evidence" value="ECO:0007669"/>
    <property type="project" value="UniProtKB-KW"/>
</dbReference>
<dbReference type="InterPro" id="IPR012474">
    <property type="entry name" value="Frigida"/>
</dbReference>
<dbReference type="PANTHER" id="PTHR31791">
    <property type="entry name" value="FRIGIDA-LIKE PROTEIN 3-RELATED"/>
    <property type="match status" value="1"/>
</dbReference>
<dbReference type="PANTHER" id="PTHR31791:SF60">
    <property type="entry name" value="FRIGIDA-LIKE PROTEIN 5"/>
    <property type="match status" value="1"/>
</dbReference>
<dbReference type="Pfam" id="PF07899">
    <property type="entry name" value="Frigida"/>
    <property type="match status" value="2"/>
</dbReference>
<sequence length="948" mass="106573">MEKVTSGLELVDISKRNFRKTLESLQEGAHSLLLLTIQWKEIESYFDSTRSVLEERAKELEALEESIKVKALELEKKEKELCLIDESMKAKQSEFEKKEKDFDLEQKAEVEKRKREVEQLEKFTTRMESVERVSDEKLMELGLRATELELKMEEVEKHRERIVAGDKLRGEFEPLVSLLAKNMGLSVTMPVKCSTLYLNENADEMVKKNTALARMVPYLDPAKVVLDAIEGSFKEYWKKDLGEADDRVVNSWIVLLENLIKMNLKITPQVKQEATPLGIAWLGKAKANMKNDPPQVFGCALFLAAYGLGSLTTHGVLLTLVERFLLYDHAPKLFRLLGLEEKVSGAVETLKKKEEYLATLKFICEFRLYKLCPGGRPGELLIEFFDSSDKAARVIAGTGTSMEAQKARREKKKADAAMAIKYIKEAKAETMFPAKILKRLAVVKNDESAQRAMEPVQKSYEKRQSTTKGVEKSEAKSSIPYEQKHVIKRPRLTEPTAPSQNLTVKQPEVVCVPTGKQVKESGADHQPDTIATHPSGTETKLNILSGSIKADMLRELVEKQPLKESEDLSNALKCTPDPAKLFLDTSMALCPTNTEGGYEFKMLITSASCSLLLNQLKKLLPKIGHPVKGDAKKLAVYWKDKIAKSKRDQLEVICFLQFLGIFGIVSEFKADDLLGLLDNSYWQTVSPDLCQFLGLDDAIPGFIQNLIKTGHRIKAIDYIYSFGMVHRFQPVSAIINDSLRITKESAEKSYREAKNESTTQVAAIDRQVRALRAAIKCISCHKLESEFQLGDLEEQIKSLLKLRRNTSNGSGSGSASSKPDSTIKQSQTAKPPTVAEVAPVTSNIPLEPSTEAASSSASKPFSKKNKRGKKRSMSGNNQSSGHIASHTSNHYPSHDYSLNQRLTWPVDNYDRGFTGFPNPDYNNNQWGQPEGPQFYHLYQPLDPRYRNY</sequence>
<proteinExistence type="evidence at transcript level"/>
<feature type="chain" id="PRO_0000423745" description="FRIGIDA-like protein 5">
    <location>
        <begin position="1"/>
        <end position="948"/>
    </location>
</feature>
<feature type="region of interest" description="Disordered" evidence="2">
    <location>
        <begin position="447"/>
        <end position="500"/>
    </location>
</feature>
<feature type="region of interest" description="Disordered" evidence="2">
    <location>
        <begin position="518"/>
        <end position="538"/>
    </location>
</feature>
<feature type="region of interest" description="Disordered" evidence="2">
    <location>
        <begin position="804"/>
        <end position="894"/>
    </location>
</feature>
<feature type="coiled-coil region" evidence="1">
    <location>
        <begin position="47"/>
        <end position="164"/>
    </location>
</feature>
<feature type="compositionally biased region" description="Basic and acidic residues" evidence="2">
    <location>
        <begin position="459"/>
        <end position="475"/>
    </location>
</feature>
<feature type="compositionally biased region" description="Basic and acidic residues" evidence="2">
    <location>
        <begin position="518"/>
        <end position="527"/>
    </location>
</feature>
<feature type="compositionally biased region" description="Low complexity" evidence="2">
    <location>
        <begin position="807"/>
        <end position="817"/>
    </location>
</feature>
<feature type="compositionally biased region" description="Polar residues" evidence="2">
    <location>
        <begin position="818"/>
        <end position="830"/>
    </location>
</feature>
<feature type="compositionally biased region" description="Basic residues" evidence="2">
    <location>
        <begin position="861"/>
        <end position="872"/>
    </location>
</feature>
<feature type="compositionally biased region" description="Polar residues" evidence="2">
    <location>
        <begin position="873"/>
        <end position="894"/>
    </location>
</feature>
<evidence type="ECO:0000255" key="1"/>
<evidence type="ECO:0000256" key="2">
    <source>
        <dbReference type="SAM" id="MobiDB-lite"/>
    </source>
</evidence>
<evidence type="ECO:0000269" key="3">
    <source>
    </source>
</evidence>
<evidence type="ECO:0000305" key="4"/>
<reference key="1">
    <citation type="journal article" date="2000" name="Nature">
        <title>Sequence and analysis of chromosome 5 of the plant Arabidopsis thaliana.</title>
        <authorList>
            <person name="Tabata S."/>
            <person name="Kaneko T."/>
            <person name="Nakamura Y."/>
            <person name="Kotani H."/>
            <person name="Kato T."/>
            <person name="Asamizu E."/>
            <person name="Miyajima N."/>
            <person name="Sasamoto S."/>
            <person name="Kimura T."/>
            <person name="Hosouchi T."/>
            <person name="Kawashima K."/>
            <person name="Kohara M."/>
            <person name="Matsumoto M."/>
            <person name="Matsuno A."/>
            <person name="Muraki A."/>
            <person name="Nakayama S."/>
            <person name="Nakazaki N."/>
            <person name="Naruo K."/>
            <person name="Okumura S."/>
            <person name="Shinpo S."/>
            <person name="Takeuchi C."/>
            <person name="Wada T."/>
            <person name="Watanabe A."/>
            <person name="Yamada M."/>
            <person name="Yasuda M."/>
            <person name="Sato S."/>
            <person name="de la Bastide M."/>
            <person name="Huang E."/>
            <person name="Spiegel L."/>
            <person name="Gnoj L."/>
            <person name="O'Shaughnessy A."/>
            <person name="Preston R."/>
            <person name="Habermann K."/>
            <person name="Murray J."/>
            <person name="Johnson D."/>
            <person name="Rohlfing T."/>
            <person name="Nelson J."/>
            <person name="Stoneking T."/>
            <person name="Pepin K."/>
            <person name="Spieth J."/>
            <person name="Sekhon M."/>
            <person name="Armstrong J."/>
            <person name="Becker M."/>
            <person name="Belter E."/>
            <person name="Cordum H."/>
            <person name="Cordes M."/>
            <person name="Courtney L."/>
            <person name="Courtney W."/>
            <person name="Dante M."/>
            <person name="Du H."/>
            <person name="Edwards J."/>
            <person name="Fryman J."/>
            <person name="Haakensen B."/>
            <person name="Lamar E."/>
            <person name="Latreille P."/>
            <person name="Leonard S."/>
            <person name="Meyer R."/>
            <person name="Mulvaney E."/>
            <person name="Ozersky P."/>
            <person name="Riley A."/>
            <person name="Strowmatt C."/>
            <person name="Wagner-McPherson C."/>
            <person name="Wollam A."/>
            <person name="Yoakum M."/>
            <person name="Bell M."/>
            <person name="Dedhia N."/>
            <person name="Parnell L."/>
            <person name="Shah R."/>
            <person name="Rodriguez M."/>
            <person name="Hoon See L."/>
            <person name="Vil D."/>
            <person name="Baker J."/>
            <person name="Kirchoff K."/>
            <person name="Toth K."/>
            <person name="King L."/>
            <person name="Bahret A."/>
            <person name="Miller B."/>
            <person name="Marra M.A."/>
            <person name="Martienssen R."/>
            <person name="McCombie W.R."/>
            <person name="Wilson R.K."/>
            <person name="Murphy G."/>
            <person name="Bancroft I."/>
            <person name="Volckaert G."/>
            <person name="Wambutt R."/>
            <person name="Duesterhoeft A."/>
            <person name="Stiekema W."/>
            <person name="Pohl T."/>
            <person name="Entian K.-D."/>
            <person name="Terryn N."/>
            <person name="Hartley N."/>
            <person name="Bent E."/>
            <person name="Johnson S."/>
            <person name="Langham S.-A."/>
            <person name="McCullagh B."/>
            <person name="Robben J."/>
            <person name="Grymonprez B."/>
            <person name="Zimmermann W."/>
            <person name="Ramsperger U."/>
            <person name="Wedler H."/>
            <person name="Balke K."/>
            <person name="Wedler E."/>
            <person name="Peters S."/>
            <person name="van Staveren M."/>
            <person name="Dirkse W."/>
            <person name="Mooijman P."/>
            <person name="Klein Lankhorst R."/>
            <person name="Weitzenegger T."/>
            <person name="Bothe G."/>
            <person name="Rose M."/>
            <person name="Hauf J."/>
            <person name="Berneiser S."/>
            <person name="Hempel S."/>
            <person name="Feldpausch M."/>
            <person name="Lamberth S."/>
            <person name="Villarroel R."/>
            <person name="Gielen J."/>
            <person name="Ardiles W."/>
            <person name="Bents O."/>
            <person name="Lemcke K."/>
            <person name="Kolesov G."/>
            <person name="Mayer K.F.X."/>
            <person name="Rudd S."/>
            <person name="Schoof H."/>
            <person name="Schueller C."/>
            <person name="Zaccaria P."/>
            <person name="Mewes H.-W."/>
            <person name="Bevan M."/>
            <person name="Fransz P.F."/>
        </authorList>
    </citation>
    <scope>NUCLEOTIDE SEQUENCE [LARGE SCALE GENOMIC DNA]</scope>
    <source>
        <strain>cv. Columbia</strain>
    </source>
</reference>
<reference key="2">
    <citation type="journal article" date="2017" name="Plant J.">
        <title>Araport11: a complete reannotation of the Arabidopsis thaliana reference genome.</title>
        <authorList>
            <person name="Cheng C.Y."/>
            <person name="Krishnakumar V."/>
            <person name="Chan A.P."/>
            <person name="Thibaud-Nissen F."/>
            <person name="Schobel S."/>
            <person name="Town C.D."/>
        </authorList>
    </citation>
    <scope>GENOME REANNOTATION</scope>
    <source>
        <strain>cv. Columbia</strain>
    </source>
</reference>
<reference key="3">
    <citation type="submission" date="2004-08" db="EMBL/GenBank/DDBJ databases">
        <authorList>
            <person name="Underwood B.A."/>
            <person name="Xiao Y.-L."/>
            <person name="Moskal W.A. Jr."/>
            <person name="Monaghan E.L."/>
            <person name="Wang W."/>
            <person name="Redman J.C."/>
            <person name="Wu H.C."/>
            <person name="Utterback T."/>
            <person name="Town C.D."/>
        </authorList>
    </citation>
    <scope>NUCLEOTIDE SEQUENCE [LARGE SCALE MRNA]</scope>
    <source>
        <strain>cv. Columbia</strain>
    </source>
</reference>
<reference key="4">
    <citation type="journal article" date="2004" name="Proc. Natl. Acad. Sci. U.S.A.">
        <title>FRIGIDA-related genes are required for the winter-annual habit in Arabidopsis.</title>
        <authorList>
            <person name="Michaels S.D."/>
            <person name="Bezerra I.C."/>
            <person name="Amasino R.M."/>
        </authorList>
    </citation>
    <scope>GENE FAMILY</scope>
</reference>
<reference key="5">
    <citation type="journal article" date="2010" name="Plant Mol. Biol.">
        <title>FRIGIDA and related proteins have a conserved central domain and family specific N- and C- terminal regions that are functionally important.</title>
        <authorList>
            <person name="Risk J.M."/>
            <person name="Laurie R.E."/>
            <person name="Macknight R.C."/>
            <person name="Day C.L."/>
        </authorList>
    </citation>
    <scope>GENE FAMILY</scope>
    <scope>NOMENCLATURE</scope>
    <scope>TISSUE SPECIFICITY</scope>
</reference>